<protein>
    <recommendedName>
        <fullName>Endoribonuclease Dicer homolog 3b</fullName>
    </recommendedName>
    <alternativeName>
        <fullName>Dicer-like protein 3b</fullName>
        <shortName>OsDCL3b</shortName>
        <ecNumber>3.1.26.-</ecNumber>
    </alternativeName>
</protein>
<reference key="1">
    <citation type="journal article" date="2003" name="Science">
        <title>In-depth view of structure, activity, and evolution of rice chromosome 10.</title>
        <authorList>
            <person name="Yu Y."/>
            <person name="Rambo T."/>
            <person name="Currie J."/>
            <person name="Saski C."/>
            <person name="Kim H.-R."/>
            <person name="Collura K."/>
            <person name="Thompson S."/>
            <person name="Simmons J."/>
            <person name="Yang T.-J."/>
            <person name="Nah G."/>
            <person name="Patel A.J."/>
            <person name="Thurmond S."/>
            <person name="Henry D."/>
            <person name="Oates R."/>
            <person name="Palmer M."/>
            <person name="Pries G."/>
            <person name="Gibson J."/>
            <person name="Anderson H."/>
            <person name="Paradkar M."/>
            <person name="Crane L."/>
            <person name="Dale J."/>
            <person name="Carver M.B."/>
            <person name="Wood T."/>
            <person name="Frisch D."/>
            <person name="Engler F."/>
            <person name="Soderlund C."/>
            <person name="Palmer L.E."/>
            <person name="Teytelman L."/>
            <person name="Nascimento L."/>
            <person name="De la Bastide M."/>
            <person name="Spiegel L."/>
            <person name="Ware D."/>
            <person name="O'Shaughnessy A."/>
            <person name="Dike S."/>
            <person name="Dedhia N."/>
            <person name="Preston R."/>
            <person name="Huang E."/>
            <person name="Ferraro K."/>
            <person name="Kuit K."/>
            <person name="Miller B."/>
            <person name="Zutavern T."/>
            <person name="Katzenberger F."/>
            <person name="Muller S."/>
            <person name="Balija V."/>
            <person name="Martienssen R.A."/>
            <person name="Stein L."/>
            <person name="Minx P."/>
            <person name="Johnson D."/>
            <person name="Cordum H."/>
            <person name="Mardis E."/>
            <person name="Cheng Z."/>
            <person name="Jiang J."/>
            <person name="Wilson R."/>
            <person name="McCombie W.R."/>
            <person name="Wing R.A."/>
            <person name="Yuan Q."/>
            <person name="Ouyang S."/>
            <person name="Liu J."/>
            <person name="Jones K.M."/>
            <person name="Gansberger K."/>
            <person name="Moffat K."/>
            <person name="Hill J."/>
            <person name="Tsitrin T."/>
            <person name="Overton L."/>
            <person name="Bera J."/>
            <person name="Kim M."/>
            <person name="Jin S."/>
            <person name="Tallon L."/>
            <person name="Ciecko A."/>
            <person name="Pai G."/>
            <person name="Van Aken S."/>
            <person name="Utterback T."/>
            <person name="Reidmuller S."/>
            <person name="Bormann J."/>
            <person name="Feldblyum T."/>
            <person name="Hsiao J."/>
            <person name="Zismann V."/>
            <person name="Blunt S."/>
            <person name="de Vazeille A.R."/>
            <person name="Shaffer T."/>
            <person name="Koo H."/>
            <person name="Suh B."/>
            <person name="Yang Q."/>
            <person name="Haas B."/>
            <person name="Peterson J."/>
            <person name="Pertea M."/>
            <person name="Volfovsky N."/>
            <person name="Wortman J."/>
            <person name="White O."/>
            <person name="Salzberg S.L."/>
            <person name="Fraser C.M."/>
            <person name="Buell C.R."/>
            <person name="Messing J."/>
            <person name="Song R."/>
            <person name="Fuks G."/>
            <person name="Llaca V."/>
            <person name="Kovchak S."/>
            <person name="Young S."/>
            <person name="Bowers J.E."/>
            <person name="Paterson A.H."/>
            <person name="Johns M.A."/>
            <person name="Mao L."/>
            <person name="Pan H."/>
            <person name="Dean R.A."/>
        </authorList>
    </citation>
    <scope>NUCLEOTIDE SEQUENCE [LARGE SCALE GENOMIC DNA]</scope>
    <source>
        <strain>cv. Nipponbare</strain>
    </source>
</reference>
<reference key="2">
    <citation type="journal article" date="2005" name="Nature">
        <title>The map-based sequence of the rice genome.</title>
        <authorList>
            <consortium name="International rice genome sequencing project (IRGSP)"/>
        </authorList>
    </citation>
    <scope>NUCLEOTIDE SEQUENCE [LARGE SCALE GENOMIC DNA]</scope>
    <source>
        <strain>cv. Nipponbare</strain>
    </source>
</reference>
<reference key="3">
    <citation type="journal article" date="2008" name="Nucleic Acids Res.">
        <title>The rice annotation project database (RAP-DB): 2008 update.</title>
        <authorList>
            <consortium name="The rice annotation project (RAP)"/>
        </authorList>
    </citation>
    <scope>GENOME REANNOTATION</scope>
    <source>
        <strain>cv. Nipponbare</strain>
    </source>
</reference>
<reference key="4">
    <citation type="journal article" date="2013" name="Rice">
        <title>Improvement of the Oryza sativa Nipponbare reference genome using next generation sequence and optical map data.</title>
        <authorList>
            <person name="Kawahara Y."/>
            <person name="de la Bastide M."/>
            <person name="Hamilton J.P."/>
            <person name="Kanamori H."/>
            <person name="McCombie W.R."/>
            <person name="Ouyang S."/>
            <person name="Schwartz D.C."/>
            <person name="Tanaka T."/>
            <person name="Wu J."/>
            <person name="Zhou S."/>
            <person name="Childs K.L."/>
            <person name="Davidson R.M."/>
            <person name="Lin H."/>
            <person name="Quesada-Ocampo L."/>
            <person name="Vaillancourt B."/>
            <person name="Sakai H."/>
            <person name="Lee S.S."/>
            <person name="Kim J."/>
            <person name="Numa H."/>
            <person name="Itoh T."/>
            <person name="Buell C.R."/>
            <person name="Matsumoto T."/>
        </authorList>
    </citation>
    <scope>GENOME REANNOTATION</scope>
    <source>
        <strain>cv. Nipponbare</strain>
    </source>
</reference>
<reference key="5">
    <citation type="journal article" date="2008" name="BMC Genomics">
        <title>Genome-wide identification, organization and phylogenetic analysis of dicer-like, argonaute and RNA-dependent RNA polymerase gene families and their expression analysis during reproductive development and stress in rice.</title>
        <authorList>
            <person name="Kapoor M."/>
            <person name="Arora R."/>
            <person name="Lama T."/>
            <person name="Nijhawan A."/>
            <person name="Khurana J.P."/>
            <person name="Tyagi A.K."/>
            <person name="Kapoor S."/>
        </authorList>
    </citation>
    <scope>GENE FAMILY</scope>
    <scope>NOMENCLATURE</scope>
</reference>
<comment type="function">
    <text evidence="1">Probably involved in the RNA silencing pathway. May cleave double-stranded RNA to produce short 21-24 nucleotides (nt) RNAs which target the selective destruction of complementary RNAs (By similarity).</text>
</comment>
<comment type="cofactor">
    <cofactor evidence="1">
        <name>Mg(2+)</name>
        <dbReference type="ChEBI" id="CHEBI:18420"/>
    </cofactor>
    <cofactor evidence="1">
        <name>Mn(2+)</name>
        <dbReference type="ChEBI" id="CHEBI:29035"/>
    </cofactor>
</comment>
<comment type="subunit">
    <text evidence="1">May interact with ARGONAUTE1 or PINHEAD through their common PAZ domains.</text>
</comment>
<comment type="subcellular location">
    <subcellularLocation>
        <location evidence="8">Nucleus</location>
    </subcellularLocation>
</comment>
<comment type="similarity">
    <text evidence="6">Belongs to the helicase family. Dicer subfamily.</text>
</comment>
<comment type="sequence caution" evidence="8">
    <conflict type="erroneous gene model prediction">
        <sequence resource="EMBL-CDS" id="AAL59041"/>
    </conflict>
</comment>
<comment type="sequence caution" evidence="8">
    <conflict type="erroneous gene model prediction">
        <sequence resource="EMBL-CDS" id="AAP54346"/>
    </conflict>
</comment>
<comment type="sequence caution" evidence="8">
    <conflict type="erroneous gene model prediction">
        <sequence resource="EMBL-CDS" id="BAF26812"/>
    </conflict>
</comment>
<name>DCL3B_ORYSJ</name>
<evidence type="ECO:0000250" key="1"/>
<evidence type="ECO:0000255" key="2">
    <source>
        <dbReference type="PROSITE-ProRule" id="PRU00142"/>
    </source>
</evidence>
<evidence type="ECO:0000255" key="3">
    <source>
        <dbReference type="PROSITE-ProRule" id="PRU00177"/>
    </source>
</evidence>
<evidence type="ECO:0000255" key="4">
    <source>
        <dbReference type="PROSITE-ProRule" id="PRU00541"/>
    </source>
</evidence>
<evidence type="ECO:0000255" key="5">
    <source>
        <dbReference type="PROSITE-ProRule" id="PRU00542"/>
    </source>
</evidence>
<evidence type="ECO:0000255" key="6">
    <source>
        <dbReference type="PROSITE-ProRule" id="PRU00657"/>
    </source>
</evidence>
<evidence type="ECO:0000256" key="7">
    <source>
        <dbReference type="SAM" id="MobiDB-lite"/>
    </source>
</evidence>
<evidence type="ECO:0000305" key="8"/>
<gene>
    <name type="primary">DCL3B</name>
    <name type="ordered locus">Os10g0485600</name>
    <name type="ordered locus">LOC_Os10g34430</name>
    <name type="ORF">OSJNBa0029C15.23</name>
</gene>
<sequence length="1637" mass="184725">MADDEAAVLPPPPPLPPPCRPHRQLRPRGSRPTADTTPRTSQLVEVFEAALRGNTIAVLDTGSGKTMVAVMLAREHARRVRAGEAPRRIVVFLAPTVHLVHQQFEVIREYTDLDVMMCSGASRVGEWGADHWKEEVGRNEIVVMTPQILLDALRHAFLTMSAVSLLIFDECHRACGSHPYARIMKEFYFGSQWRPDVFGMTASPVATKGASTLHNCEAHISQLELTLDAKIYIVEDRNELESFSPPTTIVNKYYDAYMVDFDNLKSKLQIFSDEFDSLLVGLQESPSNKFKDTDNILETSRKSLSRYHGKILYSLNDLGPIITSEVVKIHIESVKPLCDSEDCIFSKASLCLHMSYFKEALSLIEEILPQGYGELMKSESGSEELTKRGYISSKVNTLINIFKSFGSSNEVLCLIFVDRIITAKAVERFMRGIVNFSCFSISYLTGGSTSKDALSPAVQRFTLDLFRAGKVNLLFTTDVTEEGVDVPNCSCVIRFDLPRTVCSYVQSRGRARRNNSEFILMIERGNLQQQEHIFRMIQTGYYVKNCALYRHPNALSYDLSIQGMYTYQVQSTGATITADCCVNLIRKYCEKLPKDRYFMPKPSFEVTIEDGLFKCTLTLPRNAAFQSIVGPLSSSSNLSKQLVSLEACKKLHQLGELNDHLVPLTEEPMDTDFTTADEKCISGPGTTKRKELHGTTCVLALSGTWIHDSENITLNTYRIDFLCDQEGENYAGFVLLMEPELDDDVAPSKMDLFLIPNKMVYTTVTPRGKVQLNKKQLGKGKLFQEFFFNGIFGRLFHGSRKSGAQRDFIFKKGHEIQWNTESMYLLLPLRDSSYIQDDLSIHWEAIESCAGAVEQLWSSYQGDENVIPVNCIPQKRRGGQEEIIHLANKSLHCSSIKDSVVLSLHTGRIYTVLDLILDTTAEDSFDEMCKGKASPFTSFVDYYHQKYGIIIQHPEQPLLLLKQSHNAHNLLFSKLKYLDGSTGKPLLMEKEQIHARVPPELLIHLDVTTDILKSFYLLPSVIHRLQSLMLASQLRREIGYNQHIPVTLILEAITTLRCCETFSLERLELLGDSVLKYVVGCDLFLRYPMKHEGQLSDMRSKAVCNATLHKHGIWRSLQGYVRDNAFDPRRWVAPGQISLRPFPCNCGIETAFVPSHRRYIRDDPSFFVGKPCDRGHRWMCSKTISDCVEALVGAYYVGGGIAAALWVMRWFGIDIKCDMKLLQEVKFNASHLCSLSKINDIEELEAKLKYNFSVKGLLLEAITHPSLQELGVDYCYQRLEFLGDSVLDLLLTRHLYATHTDVDPGELTDLRSALVSNENFAQAVVRNNIHSHLQHGSGILLEQITEYVRSNLECQGKESEFLQHTTCKVPKVLGDIMESIAGAVFIDTDFNVDMVWEIFEPLLSPLITPDKLALPPYRELLELCSHIGCFLNSKCTSKGEEVIIEMSLQLRDELLVAQGHDRNKKRAKAKAASRILADLKQQGLSIKQCLSKAKQLDIVTSDLQFDLTSSGTQLSYSDLNDYHILEGLSSVKKEVVLPLKMEKGGPRSALFKLCKILQWPMPEFEFVEQRFRTPIVMDGATTTNFNSFVSTITLHIPDATTITFQGERRTDKKSAQDSASLMMLHKLQELKICICKT</sequence>
<dbReference type="EC" id="3.1.26.-"/>
<dbReference type="EMBL" id="AC087182">
    <property type="protein sequence ID" value="AAL59041.1"/>
    <property type="status" value="ALT_SEQ"/>
    <property type="molecule type" value="Genomic_DNA"/>
</dbReference>
<dbReference type="EMBL" id="DP000086">
    <property type="protein sequence ID" value="AAP54346.1"/>
    <property type="status" value="ALT_SEQ"/>
    <property type="molecule type" value="Genomic_DNA"/>
</dbReference>
<dbReference type="EMBL" id="AP008216">
    <property type="protein sequence ID" value="BAF26812.2"/>
    <property type="status" value="ALT_SEQ"/>
    <property type="molecule type" value="Genomic_DNA"/>
</dbReference>
<dbReference type="EMBL" id="AP014966">
    <property type="status" value="NOT_ANNOTATED_CDS"/>
    <property type="molecule type" value="Genomic_DNA"/>
</dbReference>
<dbReference type="SMR" id="Q7XD96"/>
<dbReference type="FunCoup" id="Q7XD96">
    <property type="interactions" value="1477"/>
</dbReference>
<dbReference type="STRING" id="39947.Q7XD96"/>
<dbReference type="PaxDb" id="39947-Q7XD96"/>
<dbReference type="EnsemblPlants" id="Os10t0485600-01">
    <property type="protein sequence ID" value="Os10t0485600-01"/>
    <property type="gene ID" value="Os10g0485600"/>
</dbReference>
<dbReference type="Gramene" id="Os10t0485600-01">
    <property type="protein sequence ID" value="Os10t0485600-01"/>
    <property type="gene ID" value="Os10g0485600"/>
</dbReference>
<dbReference type="KEGG" id="dosa:Os10g0485600"/>
<dbReference type="eggNOG" id="KOG0701">
    <property type="taxonomic scope" value="Eukaryota"/>
</dbReference>
<dbReference type="HOGENOM" id="CLU_000907_4_4_1"/>
<dbReference type="InParanoid" id="Q7XD96"/>
<dbReference type="Proteomes" id="UP000000763">
    <property type="component" value="Chromosome 10"/>
</dbReference>
<dbReference type="Proteomes" id="UP000059680">
    <property type="component" value="Chromosome 10"/>
</dbReference>
<dbReference type="GO" id="GO:0005737">
    <property type="term" value="C:cytoplasm"/>
    <property type="evidence" value="ECO:0000318"/>
    <property type="project" value="GO_Central"/>
</dbReference>
<dbReference type="GO" id="GO:0005634">
    <property type="term" value="C:nucleus"/>
    <property type="evidence" value="ECO:0000318"/>
    <property type="project" value="GO_Central"/>
</dbReference>
<dbReference type="GO" id="GO:0005524">
    <property type="term" value="F:ATP binding"/>
    <property type="evidence" value="ECO:0007669"/>
    <property type="project" value="UniProtKB-KW"/>
</dbReference>
<dbReference type="GO" id="GO:0004386">
    <property type="term" value="F:helicase activity"/>
    <property type="evidence" value="ECO:0007669"/>
    <property type="project" value="UniProtKB-KW"/>
</dbReference>
<dbReference type="GO" id="GO:0046872">
    <property type="term" value="F:metal ion binding"/>
    <property type="evidence" value="ECO:0007669"/>
    <property type="project" value="UniProtKB-KW"/>
</dbReference>
<dbReference type="GO" id="GO:0004525">
    <property type="term" value="F:ribonuclease III activity"/>
    <property type="evidence" value="ECO:0000318"/>
    <property type="project" value="GO_Central"/>
</dbReference>
<dbReference type="GO" id="GO:0003723">
    <property type="term" value="F:RNA binding"/>
    <property type="evidence" value="ECO:0000318"/>
    <property type="project" value="GO_Central"/>
</dbReference>
<dbReference type="GO" id="GO:0030422">
    <property type="term" value="P:siRNA processing"/>
    <property type="evidence" value="ECO:0000318"/>
    <property type="project" value="GO_Central"/>
</dbReference>
<dbReference type="CDD" id="cd18034">
    <property type="entry name" value="DEXHc_dicer"/>
    <property type="match status" value="1"/>
</dbReference>
<dbReference type="CDD" id="cd00593">
    <property type="entry name" value="RIBOc"/>
    <property type="match status" value="2"/>
</dbReference>
<dbReference type="FunFam" id="1.10.1520.10:FF:000008">
    <property type="entry name" value="Dicer-like 104"/>
    <property type="match status" value="1"/>
</dbReference>
<dbReference type="FunFam" id="2.170.260.10:FF:000004">
    <property type="entry name" value="Dicer-like 104"/>
    <property type="match status" value="1"/>
</dbReference>
<dbReference type="FunFam" id="3.30.160.20:FF:000038">
    <property type="entry name" value="Dicer-like 104"/>
    <property type="match status" value="1"/>
</dbReference>
<dbReference type="FunFam" id="1.10.1520.10:FF:000004">
    <property type="entry name" value="Endoribonuclease dicer-like 1"/>
    <property type="match status" value="1"/>
</dbReference>
<dbReference type="FunFam" id="3.30.160.380:FF:000001">
    <property type="entry name" value="Endoribonuclease dicer-like 1"/>
    <property type="match status" value="1"/>
</dbReference>
<dbReference type="FunFam" id="3.40.50.300:FF:000420">
    <property type="entry name" value="Endoribonuclease dicer-like 1"/>
    <property type="match status" value="1"/>
</dbReference>
<dbReference type="FunFam" id="3.40.50.300:FF:000705">
    <property type="entry name" value="Endoribonuclease dicer-like protein"/>
    <property type="match status" value="1"/>
</dbReference>
<dbReference type="Gene3D" id="3.30.160.20">
    <property type="match status" value="1"/>
</dbReference>
<dbReference type="Gene3D" id="3.30.160.380">
    <property type="entry name" value="Dicer dimerisation domain"/>
    <property type="match status" value="1"/>
</dbReference>
<dbReference type="Gene3D" id="3.40.50.300">
    <property type="entry name" value="P-loop containing nucleotide triphosphate hydrolases"/>
    <property type="match status" value="2"/>
</dbReference>
<dbReference type="Gene3D" id="2.170.260.10">
    <property type="entry name" value="paz domain"/>
    <property type="match status" value="1"/>
</dbReference>
<dbReference type="Gene3D" id="1.10.1520.10">
    <property type="entry name" value="Ribonuclease III domain"/>
    <property type="match status" value="2"/>
</dbReference>
<dbReference type="InterPro" id="IPR011545">
    <property type="entry name" value="DEAD/DEAH_box_helicase_dom"/>
</dbReference>
<dbReference type="InterPro" id="IPR038248">
    <property type="entry name" value="Dicer_dimer_sf"/>
</dbReference>
<dbReference type="InterPro" id="IPR005034">
    <property type="entry name" value="Dicer_dimerisation_dom"/>
</dbReference>
<dbReference type="InterPro" id="IPR014720">
    <property type="entry name" value="dsRBD_dom"/>
</dbReference>
<dbReference type="InterPro" id="IPR014001">
    <property type="entry name" value="Helicase_ATP-bd"/>
</dbReference>
<dbReference type="InterPro" id="IPR001650">
    <property type="entry name" value="Helicase_C-like"/>
</dbReference>
<dbReference type="InterPro" id="IPR027417">
    <property type="entry name" value="P-loop_NTPase"/>
</dbReference>
<dbReference type="InterPro" id="IPR003100">
    <property type="entry name" value="PAZ_dom"/>
</dbReference>
<dbReference type="InterPro" id="IPR036085">
    <property type="entry name" value="PAZ_dom_sf"/>
</dbReference>
<dbReference type="InterPro" id="IPR000999">
    <property type="entry name" value="RNase_III_dom"/>
</dbReference>
<dbReference type="InterPro" id="IPR036389">
    <property type="entry name" value="RNase_III_sf"/>
</dbReference>
<dbReference type="PANTHER" id="PTHR14950">
    <property type="entry name" value="DICER-RELATED"/>
    <property type="match status" value="1"/>
</dbReference>
<dbReference type="PANTHER" id="PTHR14950:SF31">
    <property type="entry name" value="ENDORIBONUCLEASE DICER HOMOLOG 3B"/>
    <property type="match status" value="1"/>
</dbReference>
<dbReference type="Pfam" id="PF00270">
    <property type="entry name" value="DEAD"/>
    <property type="match status" value="1"/>
</dbReference>
<dbReference type="Pfam" id="PF03368">
    <property type="entry name" value="Dicer_dimer"/>
    <property type="match status" value="1"/>
</dbReference>
<dbReference type="Pfam" id="PF00035">
    <property type="entry name" value="dsrm"/>
    <property type="match status" value="1"/>
</dbReference>
<dbReference type="Pfam" id="PF00271">
    <property type="entry name" value="Helicase_C"/>
    <property type="match status" value="1"/>
</dbReference>
<dbReference type="Pfam" id="PF02170">
    <property type="entry name" value="PAZ"/>
    <property type="match status" value="1"/>
</dbReference>
<dbReference type="Pfam" id="PF00636">
    <property type="entry name" value="Ribonuclease_3"/>
    <property type="match status" value="2"/>
</dbReference>
<dbReference type="SMART" id="SM00487">
    <property type="entry name" value="DEXDc"/>
    <property type="match status" value="1"/>
</dbReference>
<dbReference type="SMART" id="SM00490">
    <property type="entry name" value="HELICc"/>
    <property type="match status" value="1"/>
</dbReference>
<dbReference type="SMART" id="SM00949">
    <property type="entry name" value="PAZ"/>
    <property type="match status" value="1"/>
</dbReference>
<dbReference type="SMART" id="SM00535">
    <property type="entry name" value="RIBOc"/>
    <property type="match status" value="2"/>
</dbReference>
<dbReference type="SUPFAM" id="SSF52540">
    <property type="entry name" value="P-loop containing nucleoside triphosphate hydrolases"/>
    <property type="match status" value="1"/>
</dbReference>
<dbReference type="SUPFAM" id="SSF101690">
    <property type="entry name" value="PAZ domain"/>
    <property type="match status" value="1"/>
</dbReference>
<dbReference type="SUPFAM" id="SSF69065">
    <property type="entry name" value="RNase III domain-like"/>
    <property type="match status" value="2"/>
</dbReference>
<dbReference type="PROSITE" id="PS51327">
    <property type="entry name" value="DICER_DSRBF"/>
    <property type="match status" value="1"/>
</dbReference>
<dbReference type="PROSITE" id="PS51192">
    <property type="entry name" value="HELICASE_ATP_BIND_1"/>
    <property type="match status" value="1"/>
</dbReference>
<dbReference type="PROSITE" id="PS51194">
    <property type="entry name" value="HELICASE_CTER"/>
    <property type="match status" value="1"/>
</dbReference>
<dbReference type="PROSITE" id="PS50821">
    <property type="entry name" value="PAZ"/>
    <property type="match status" value="1"/>
</dbReference>
<dbReference type="PROSITE" id="PS00517">
    <property type="entry name" value="RNASE_3_1"/>
    <property type="match status" value="1"/>
</dbReference>
<dbReference type="PROSITE" id="PS50142">
    <property type="entry name" value="RNASE_3_2"/>
    <property type="match status" value="2"/>
</dbReference>
<proteinExistence type="inferred from homology"/>
<feature type="chain" id="PRO_0000378420" description="Endoribonuclease Dicer homolog 3b">
    <location>
        <begin position="1"/>
        <end position="1637"/>
    </location>
</feature>
<feature type="domain" description="Helicase ATP-binding" evidence="4">
    <location>
        <begin position="46"/>
        <end position="222"/>
    </location>
</feature>
<feature type="domain" description="Helicase C-terminal" evidence="5">
    <location>
        <begin position="404"/>
        <end position="556"/>
    </location>
</feature>
<feature type="domain" description="Dicer dsRNA-binding fold" evidence="6">
    <location>
        <begin position="581"/>
        <end position="671"/>
    </location>
</feature>
<feature type="domain" description="PAZ" evidence="2">
    <location>
        <begin position="882"/>
        <end position="1006"/>
    </location>
</feature>
<feature type="domain" description="RNase III 1" evidence="3">
    <location>
        <begin position="1031"/>
        <end position="1200"/>
    </location>
</feature>
<feature type="domain" description="RNase III 2" evidence="3">
    <location>
        <begin position="1241"/>
        <end position="1389"/>
    </location>
</feature>
<feature type="domain" description="DRBM 1">
    <location>
        <begin position="1412"/>
        <end position="1481"/>
    </location>
</feature>
<feature type="domain" description="DRBM 2">
    <location>
        <begin position="1545"/>
        <end position="1629"/>
    </location>
</feature>
<feature type="region of interest" description="Disordered" evidence="7">
    <location>
        <begin position="1"/>
        <end position="40"/>
    </location>
</feature>
<feature type="short sequence motif" description="DECH box">
    <location>
        <begin position="169"/>
        <end position="172"/>
    </location>
</feature>
<feature type="compositionally biased region" description="Pro residues" evidence="7">
    <location>
        <begin position="9"/>
        <end position="19"/>
    </location>
</feature>
<feature type="compositionally biased region" description="Basic residues" evidence="7">
    <location>
        <begin position="20"/>
        <end position="29"/>
    </location>
</feature>
<feature type="binding site" evidence="4">
    <location>
        <begin position="59"/>
        <end position="66"/>
    </location>
    <ligand>
        <name>ATP</name>
        <dbReference type="ChEBI" id="CHEBI:30616"/>
    </ligand>
</feature>
<feature type="binding site" evidence="1">
    <location>
        <position position="1214"/>
    </location>
    <ligand>
        <name>Mg(2+)</name>
        <dbReference type="ChEBI" id="CHEBI:18420"/>
    </ligand>
</feature>
<feature type="binding site" evidence="1">
    <location>
        <position position="1309"/>
    </location>
    <ligand>
        <name>Mg(2+)</name>
        <dbReference type="ChEBI" id="CHEBI:18420"/>
    </ligand>
</feature>
<feature type="binding site" evidence="1">
    <location>
        <position position="1312"/>
    </location>
    <ligand>
        <name>Mg(2+)</name>
        <dbReference type="ChEBI" id="CHEBI:18420"/>
    </ligand>
</feature>
<feature type="site" description="Important for activity" evidence="1">
    <location>
        <position position="1305"/>
    </location>
</feature>
<organism>
    <name type="scientific">Oryza sativa subsp. japonica</name>
    <name type="common">Rice</name>
    <dbReference type="NCBI Taxonomy" id="39947"/>
    <lineage>
        <taxon>Eukaryota</taxon>
        <taxon>Viridiplantae</taxon>
        <taxon>Streptophyta</taxon>
        <taxon>Embryophyta</taxon>
        <taxon>Tracheophyta</taxon>
        <taxon>Spermatophyta</taxon>
        <taxon>Magnoliopsida</taxon>
        <taxon>Liliopsida</taxon>
        <taxon>Poales</taxon>
        <taxon>Poaceae</taxon>
        <taxon>BOP clade</taxon>
        <taxon>Oryzoideae</taxon>
        <taxon>Oryzeae</taxon>
        <taxon>Oryzinae</taxon>
        <taxon>Oryza</taxon>
        <taxon>Oryza sativa</taxon>
    </lineage>
</organism>
<accession>Q7XD96</accession>
<accession>Q0IWV3</accession>
<accession>Q8W367</accession>
<keyword id="KW-0067">ATP-binding</keyword>
<keyword id="KW-0255">Endonuclease</keyword>
<keyword id="KW-0347">Helicase</keyword>
<keyword id="KW-0378">Hydrolase</keyword>
<keyword id="KW-0460">Magnesium</keyword>
<keyword id="KW-0464">Manganese</keyword>
<keyword id="KW-0479">Metal-binding</keyword>
<keyword id="KW-0540">Nuclease</keyword>
<keyword id="KW-0547">Nucleotide-binding</keyword>
<keyword id="KW-0539">Nucleus</keyword>
<keyword id="KW-1185">Reference proteome</keyword>
<keyword id="KW-0677">Repeat</keyword>
<keyword id="KW-0694">RNA-binding</keyword>
<keyword id="KW-0943">RNA-mediated gene silencing</keyword>